<protein>
    <recommendedName>
        <fullName evidence="1">Large ribosomal subunit protein uL22</fullName>
    </recommendedName>
    <alternativeName>
        <fullName evidence="2">50S ribosomal protein L22</fullName>
    </alternativeName>
</protein>
<gene>
    <name evidence="1" type="primary">rplV</name>
    <name type="ordered locus">APH_0285</name>
</gene>
<comment type="function">
    <text evidence="1">This protein binds specifically to 23S rRNA; its binding is stimulated by other ribosomal proteins, e.g. L4, L17, and L20. It is important during the early stages of 50S assembly. It makes multiple contacts with different domains of the 23S rRNA in the assembled 50S subunit and ribosome (By similarity).</text>
</comment>
<comment type="function">
    <text evidence="1">The globular domain of the protein is located near the polypeptide exit tunnel on the outside of the subunit, while an extended beta-hairpin is found that lines the wall of the exit tunnel in the center of the 70S ribosome.</text>
</comment>
<comment type="subunit">
    <text evidence="1">Part of the 50S ribosomal subunit.</text>
</comment>
<comment type="similarity">
    <text evidence="1">Belongs to the universal ribosomal protein uL22 family.</text>
</comment>
<sequence>MSIVIAAKGLGLRSTPAKLNLVADLIRGKDVAVAAMYLKFCKKKAALLIDKVLKSAIANARANYGVDADNLYVKEVLVGKAFTLRRVQPRARGRACRISKRYGSVVVKLLER</sequence>
<proteinExistence type="inferred from homology"/>
<organism>
    <name type="scientific">Anaplasma phagocytophilum (strain HZ)</name>
    <dbReference type="NCBI Taxonomy" id="212042"/>
    <lineage>
        <taxon>Bacteria</taxon>
        <taxon>Pseudomonadati</taxon>
        <taxon>Pseudomonadota</taxon>
        <taxon>Alphaproteobacteria</taxon>
        <taxon>Rickettsiales</taxon>
        <taxon>Anaplasmataceae</taxon>
        <taxon>Anaplasma</taxon>
        <taxon>phagocytophilum group</taxon>
    </lineage>
</organism>
<evidence type="ECO:0000255" key="1">
    <source>
        <dbReference type="HAMAP-Rule" id="MF_01331"/>
    </source>
</evidence>
<evidence type="ECO:0000305" key="2"/>
<name>RL22_ANAPZ</name>
<accession>Q2GL54</accession>
<keyword id="KW-0687">Ribonucleoprotein</keyword>
<keyword id="KW-0689">Ribosomal protein</keyword>
<keyword id="KW-0694">RNA-binding</keyword>
<keyword id="KW-0699">rRNA-binding</keyword>
<reference key="1">
    <citation type="journal article" date="2006" name="PLoS Genet.">
        <title>Comparative genomics of emerging human ehrlichiosis agents.</title>
        <authorList>
            <person name="Dunning Hotopp J.C."/>
            <person name="Lin M."/>
            <person name="Madupu R."/>
            <person name="Crabtree J."/>
            <person name="Angiuoli S.V."/>
            <person name="Eisen J.A."/>
            <person name="Seshadri R."/>
            <person name="Ren Q."/>
            <person name="Wu M."/>
            <person name="Utterback T.R."/>
            <person name="Smith S."/>
            <person name="Lewis M."/>
            <person name="Khouri H."/>
            <person name="Zhang C."/>
            <person name="Niu H."/>
            <person name="Lin Q."/>
            <person name="Ohashi N."/>
            <person name="Zhi N."/>
            <person name="Nelson W.C."/>
            <person name="Brinkac L.M."/>
            <person name="Dodson R.J."/>
            <person name="Rosovitz M.J."/>
            <person name="Sundaram J.P."/>
            <person name="Daugherty S.C."/>
            <person name="Davidsen T."/>
            <person name="Durkin A.S."/>
            <person name="Gwinn M.L."/>
            <person name="Haft D.H."/>
            <person name="Selengut J.D."/>
            <person name="Sullivan S.A."/>
            <person name="Zafar N."/>
            <person name="Zhou L."/>
            <person name="Benahmed F."/>
            <person name="Forberger H."/>
            <person name="Halpin R."/>
            <person name="Mulligan S."/>
            <person name="Robinson J."/>
            <person name="White O."/>
            <person name="Rikihisa Y."/>
            <person name="Tettelin H."/>
        </authorList>
    </citation>
    <scope>NUCLEOTIDE SEQUENCE [LARGE SCALE GENOMIC DNA]</scope>
    <source>
        <strain>HZ</strain>
    </source>
</reference>
<dbReference type="EMBL" id="CP000235">
    <property type="protein sequence ID" value="ABD43250.1"/>
    <property type="molecule type" value="Genomic_DNA"/>
</dbReference>
<dbReference type="RefSeq" id="WP_011450420.1">
    <property type="nucleotide sequence ID" value="NC_007797.1"/>
</dbReference>
<dbReference type="SMR" id="Q2GL54"/>
<dbReference type="STRING" id="212042.APH_0285"/>
<dbReference type="PaxDb" id="212042-APH_0285"/>
<dbReference type="EnsemblBacteria" id="ABD43250">
    <property type="protein sequence ID" value="ABD43250"/>
    <property type="gene ID" value="APH_0285"/>
</dbReference>
<dbReference type="GeneID" id="92747518"/>
<dbReference type="KEGG" id="aph:APH_0285"/>
<dbReference type="eggNOG" id="COG0091">
    <property type="taxonomic scope" value="Bacteria"/>
</dbReference>
<dbReference type="HOGENOM" id="CLU_083987_3_0_5"/>
<dbReference type="Proteomes" id="UP000001943">
    <property type="component" value="Chromosome"/>
</dbReference>
<dbReference type="GO" id="GO:0022625">
    <property type="term" value="C:cytosolic large ribosomal subunit"/>
    <property type="evidence" value="ECO:0007669"/>
    <property type="project" value="TreeGrafter"/>
</dbReference>
<dbReference type="GO" id="GO:0019843">
    <property type="term" value="F:rRNA binding"/>
    <property type="evidence" value="ECO:0007669"/>
    <property type="project" value="UniProtKB-UniRule"/>
</dbReference>
<dbReference type="GO" id="GO:0003735">
    <property type="term" value="F:structural constituent of ribosome"/>
    <property type="evidence" value="ECO:0007669"/>
    <property type="project" value="InterPro"/>
</dbReference>
<dbReference type="GO" id="GO:0006412">
    <property type="term" value="P:translation"/>
    <property type="evidence" value="ECO:0007669"/>
    <property type="project" value="UniProtKB-UniRule"/>
</dbReference>
<dbReference type="CDD" id="cd00336">
    <property type="entry name" value="Ribosomal_L22"/>
    <property type="match status" value="1"/>
</dbReference>
<dbReference type="Gene3D" id="3.90.470.10">
    <property type="entry name" value="Ribosomal protein L22/L17"/>
    <property type="match status" value="1"/>
</dbReference>
<dbReference type="HAMAP" id="MF_01331_B">
    <property type="entry name" value="Ribosomal_uL22_B"/>
    <property type="match status" value="1"/>
</dbReference>
<dbReference type="InterPro" id="IPR001063">
    <property type="entry name" value="Ribosomal_uL22"/>
</dbReference>
<dbReference type="InterPro" id="IPR005727">
    <property type="entry name" value="Ribosomal_uL22_bac/chlpt-type"/>
</dbReference>
<dbReference type="InterPro" id="IPR047867">
    <property type="entry name" value="Ribosomal_uL22_bac/org-type"/>
</dbReference>
<dbReference type="InterPro" id="IPR036394">
    <property type="entry name" value="Ribosomal_uL22_sf"/>
</dbReference>
<dbReference type="NCBIfam" id="TIGR01044">
    <property type="entry name" value="rplV_bact"/>
    <property type="match status" value="1"/>
</dbReference>
<dbReference type="PANTHER" id="PTHR13501">
    <property type="entry name" value="CHLOROPLAST 50S RIBOSOMAL PROTEIN L22-RELATED"/>
    <property type="match status" value="1"/>
</dbReference>
<dbReference type="PANTHER" id="PTHR13501:SF8">
    <property type="entry name" value="LARGE RIBOSOMAL SUBUNIT PROTEIN UL22M"/>
    <property type="match status" value="1"/>
</dbReference>
<dbReference type="Pfam" id="PF00237">
    <property type="entry name" value="Ribosomal_L22"/>
    <property type="match status" value="1"/>
</dbReference>
<dbReference type="SUPFAM" id="SSF54843">
    <property type="entry name" value="Ribosomal protein L22"/>
    <property type="match status" value="1"/>
</dbReference>
<feature type="chain" id="PRO_0000243114" description="Large ribosomal subunit protein uL22">
    <location>
        <begin position="1"/>
        <end position="112"/>
    </location>
</feature>